<protein>
    <recommendedName>
        <fullName evidence="2">Crk-like protein</fullName>
    </recommendedName>
</protein>
<dbReference type="EMBL" id="CH473999">
    <property type="protein sequence ID" value="EDL77890.1"/>
    <property type="molecule type" value="Genomic_DNA"/>
</dbReference>
<dbReference type="EMBL" id="BC085865">
    <property type="protein sequence ID" value="AAH85865.1"/>
    <property type="molecule type" value="mRNA"/>
</dbReference>
<dbReference type="RefSeq" id="NP_001008285.1">
    <property type="nucleotide sequence ID" value="NM_001008284.1"/>
</dbReference>
<dbReference type="RefSeq" id="XP_003751143.1">
    <property type="nucleotide sequence ID" value="XM_003751095.4"/>
</dbReference>
<dbReference type="BMRB" id="Q5U2U2"/>
<dbReference type="SMR" id="Q5U2U2"/>
<dbReference type="BioGRID" id="252388">
    <property type="interactions" value="2"/>
</dbReference>
<dbReference type="CORUM" id="Q5U2U2"/>
<dbReference type="FunCoup" id="Q5U2U2">
    <property type="interactions" value="4881"/>
</dbReference>
<dbReference type="IntAct" id="Q5U2U2">
    <property type="interactions" value="25"/>
</dbReference>
<dbReference type="STRING" id="10116.ENSRNOP00000002552"/>
<dbReference type="GlyGen" id="Q5U2U2">
    <property type="glycosylation" value="2 sites"/>
</dbReference>
<dbReference type="iPTMnet" id="Q5U2U2"/>
<dbReference type="PhosphoSitePlus" id="Q5U2U2"/>
<dbReference type="jPOST" id="Q5U2U2"/>
<dbReference type="PaxDb" id="10116-ENSRNOP00000002552"/>
<dbReference type="Ensembl" id="ENSRNOT00000002552.6">
    <property type="protein sequence ID" value="ENSRNOP00000002552.4"/>
    <property type="gene ID" value="ENSRNOG00000001868.7"/>
</dbReference>
<dbReference type="GeneID" id="287942"/>
<dbReference type="KEGG" id="rno:287942"/>
<dbReference type="AGR" id="RGD:1308531"/>
<dbReference type="CTD" id="1399"/>
<dbReference type="RGD" id="1308531">
    <property type="gene designation" value="Crkl"/>
</dbReference>
<dbReference type="eggNOG" id="KOG4792">
    <property type="taxonomic scope" value="Eukaryota"/>
</dbReference>
<dbReference type="GeneTree" id="ENSGT00820000127055"/>
<dbReference type="HOGENOM" id="CLU_060542_0_1_1"/>
<dbReference type="InParanoid" id="Q5U2U2"/>
<dbReference type="OMA" id="WYVGPLS"/>
<dbReference type="OrthoDB" id="9204160at2759"/>
<dbReference type="PhylomeDB" id="Q5U2U2"/>
<dbReference type="TreeFam" id="TF321436"/>
<dbReference type="Reactome" id="R-RNO-170968">
    <property type="pathway name" value="Frs2-mediated activation"/>
</dbReference>
<dbReference type="Reactome" id="R-RNO-186763">
    <property type="pathway name" value="Downstream signal transduction"/>
</dbReference>
<dbReference type="Reactome" id="R-RNO-8875555">
    <property type="pathway name" value="MET activates RAP1 and RAC1"/>
</dbReference>
<dbReference type="Reactome" id="R-RNO-8875656">
    <property type="pathway name" value="MET receptor recycling"/>
</dbReference>
<dbReference type="Reactome" id="R-RNO-9027284">
    <property type="pathway name" value="Erythropoietin activates RAS"/>
</dbReference>
<dbReference type="Reactome" id="R-RNO-912631">
    <property type="pathway name" value="Regulation of signaling by CBL"/>
</dbReference>
<dbReference type="PRO" id="PR:Q5U2U2"/>
<dbReference type="Proteomes" id="UP000002494">
    <property type="component" value="Chromosome 11"/>
</dbReference>
<dbReference type="Proteomes" id="UP000234681">
    <property type="component" value="Chromosome 11"/>
</dbReference>
<dbReference type="Bgee" id="ENSRNOG00000001868">
    <property type="expression patterns" value="Expressed in skeletal muscle tissue and 19 other cell types or tissues"/>
</dbReference>
<dbReference type="GO" id="GO:0005737">
    <property type="term" value="C:cytoplasm"/>
    <property type="evidence" value="ECO:0000318"/>
    <property type="project" value="GO_Central"/>
</dbReference>
<dbReference type="GO" id="GO:0005829">
    <property type="term" value="C:cytosol"/>
    <property type="evidence" value="ECO:0007669"/>
    <property type="project" value="Ensembl"/>
</dbReference>
<dbReference type="GO" id="GO:0098890">
    <property type="term" value="C:extrinsic component of postsynaptic membrane"/>
    <property type="evidence" value="ECO:0000266"/>
    <property type="project" value="RGD"/>
</dbReference>
<dbReference type="GO" id="GO:0031594">
    <property type="term" value="C:neuromuscular junction"/>
    <property type="evidence" value="ECO:0000266"/>
    <property type="project" value="RGD"/>
</dbReference>
<dbReference type="GO" id="GO:0005654">
    <property type="term" value="C:nucleoplasm"/>
    <property type="evidence" value="ECO:0007669"/>
    <property type="project" value="Ensembl"/>
</dbReference>
<dbReference type="GO" id="GO:0032991">
    <property type="term" value="C:protein-containing complex"/>
    <property type="evidence" value="ECO:0000266"/>
    <property type="project" value="RGD"/>
</dbReference>
<dbReference type="GO" id="GO:0045202">
    <property type="term" value="C:synapse"/>
    <property type="evidence" value="ECO:0000266"/>
    <property type="project" value="RGD"/>
</dbReference>
<dbReference type="GO" id="GO:0042802">
    <property type="term" value="F:identical protein binding"/>
    <property type="evidence" value="ECO:0000266"/>
    <property type="project" value="RGD"/>
</dbReference>
<dbReference type="GO" id="GO:0001784">
    <property type="term" value="F:phosphotyrosine residue binding"/>
    <property type="evidence" value="ECO:0000266"/>
    <property type="project" value="RGD"/>
</dbReference>
<dbReference type="GO" id="GO:0030971">
    <property type="term" value="F:receptor tyrosine kinase binding"/>
    <property type="evidence" value="ECO:0000318"/>
    <property type="project" value="GO_Central"/>
</dbReference>
<dbReference type="GO" id="GO:0061629">
    <property type="term" value="F:RNA polymerase II-specific DNA-binding transcription factor binding"/>
    <property type="evidence" value="ECO:0000266"/>
    <property type="project" value="RGD"/>
</dbReference>
<dbReference type="GO" id="GO:0035591">
    <property type="term" value="F:signaling adaptor activity"/>
    <property type="evidence" value="ECO:0000266"/>
    <property type="project" value="RGD"/>
</dbReference>
<dbReference type="GO" id="GO:0095500">
    <property type="term" value="P:acetylcholine receptor signaling pathway"/>
    <property type="evidence" value="ECO:0000266"/>
    <property type="project" value="RGD"/>
</dbReference>
<dbReference type="GO" id="GO:0009887">
    <property type="term" value="P:animal organ morphogenesis"/>
    <property type="evidence" value="ECO:0000266"/>
    <property type="project" value="RGD"/>
</dbReference>
<dbReference type="GO" id="GO:0009952">
    <property type="term" value="P:anterior/posterior pattern specification"/>
    <property type="evidence" value="ECO:0000266"/>
    <property type="project" value="RGD"/>
</dbReference>
<dbReference type="GO" id="GO:0001783">
    <property type="term" value="P:B cell apoptotic process"/>
    <property type="evidence" value="ECO:0000266"/>
    <property type="project" value="RGD"/>
</dbReference>
<dbReference type="GO" id="GO:0001568">
    <property type="term" value="P:blood vessel development"/>
    <property type="evidence" value="ECO:0000266"/>
    <property type="project" value="RGD"/>
</dbReference>
<dbReference type="GO" id="GO:0060326">
    <property type="term" value="P:cell chemotaxis"/>
    <property type="evidence" value="ECO:0000266"/>
    <property type="project" value="RGD"/>
</dbReference>
<dbReference type="GO" id="GO:0016477">
    <property type="term" value="P:cell migration"/>
    <property type="evidence" value="ECO:0000318"/>
    <property type="project" value="GO_Central"/>
</dbReference>
<dbReference type="GO" id="GO:0098761">
    <property type="term" value="P:cellular response to interleukin-7"/>
    <property type="evidence" value="ECO:0000266"/>
    <property type="project" value="RGD"/>
</dbReference>
<dbReference type="GO" id="GO:0071560">
    <property type="term" value="P:cellular response to transforming growth factor beta stimulus"/>
    <property type="evidence" value="ECO:0000266"/>
    <property type="project" value="RGD"/>
</dbReference>
<dbReference type="GO" id="GO:0071466">
    <property type="term" value="P:cellular response to xenobiotic stimulus"/>
    <property type="evidence" value="ECO:0000266"/>
    <property type="project" value="RGD"/>
</dbReference>
<dbReference type="GO" id="GO:0098749">
    <property type="term" value="P:cerebellar neuron development"/>
    <property type="evidence" value="ECO:0000266"/>
    <property type="project" value="RGD"/>
</dbReference>
<dbReference type="GO" id="GO:0021987">
    <property type="term" value="P:cerebral cortex development"/>
    <property type="evidence" value="ECO:0000266"/>
    <property type="project" value="RGD"/>
</dbReference>
<dbReference type="GO" id="GO:0160093">
    <property type="term" value="P:chordate pharynx development"/>
    <property type="evidence" value="ECO:0000266"/>
    <property type="project" value="RGD"/>
</dbReference>
<dbReference type="GO" id="GO:1904888">
    <property type="term" value="P:cranial skeletal system development"/>
    <property type="evidence" value="ECO:0000266"/>
    <property type="project" value="RGD"/>
</dbReference>
<dbReference type="GO" id="GO:0016358">
    <property type="term" value="P:dendrite development"/>
    <property type="evidence" value="ECO:0000266"/>
    <property type="project" value="RGD"/>
</dbReference>
<dbReference type="GO" id="GO:0086100">
    <property type="term" value="P:endothelin receptor signaling pathway"/>
    <property type="evidence" value="ECO:0000266"/>
    <property type="project" value="RGD"/>
</dbReference>
<dbReference type="GO" id="GO:0007167">
    <property type="term" value="P:enzyme-linked receptor protein signaling pathway"/>
    <property type="evidence" value="ECO:0000266"/>
    <property type="project" value="RGD"/>
</dbReference>
<dbReference type="GO" id="GO:0030010">
    <property type="term" value="P:establishment of cell polarity"/>
    <property type="evidence" value="ECO:0000266"/>
    <property type="project" value="RGD"/>
</dbReference>
<dbReference type="GO" id="GO:0008543">
    <property type="term" value="P:fibroblast growth factor receptor signaling pathway"/>
    <property type="evidence" value="ECO:0000266"/>
    <property type="project" value="RGD"/>
</dbReference>
<dbReference type="GO" id="GO:0007507">
    <property type="term" value="P:heart development"/>
    <property type="evidence" value="ECO:0000266"/>
    <property type="project" value="RGD"/>
</dbReference>
<dbReference type="GO" id="GO:0035685">
    <property type="term" value="P:helper T cell diapedesis"/>
    <property type="evidence" value="ECO:0000266"/>
    <property type="project" value="RGD"/>
</dbReference>
<dbReference type="GO" id="GO:0021766">
    <property type="term" value="P:hippocampus development"/>
    <property type="evidence" value="ECO:0000266"/>
    <property type="project" value="RGD"/>
</dbReference>
<dbReference type="GO" id="GO:0006629">
    <property type="term" value="P:lipid metabolic process"/>
    <property type="evidence" value="ECO:0000266"/>
    <property type="project" value="RGD"/>
</dbReference>
<dbReference type="GO" id="GO:0008584">
    <property type="term" value="P:male gonad development"/>
    <property type="evidence" value="ECO:0000266"/>
    <property type="project" value="RGD"/>
</dbReference>
<dbReference type="GO" id="GO:0010629">
    <property type="term" value="P:negative regulation of gene expression"/>
    <property type="evidence" value="ECO:0000266"/>
    <property type="project" value="RGD"/>
</dbReference>
<dbReference type="GO" id="GO:0060392">
    <property type="term" value="P:negative regulation of SMAD protein signal transduction"/>
    <property type="evidence" value="ECO:0000266"/>
    <property type="project" value="RGD"/>
</dbReference>
<dbReference type="GO" id="GO:0001764">
    <property type="term" value="P:neuron migration"/>
    <property type="evidence" value="ECO:0000266"/>
    <property type="project" value="RGD"/>
</dbReference>
<dbReference type="GO" id="GO:0003151">
    <property type="term" value="P:outflow tract morphogenesis"/>
    <property type="evidence" value="ECO:0000266"/>
    <property type="project" value="RGD"/>
</dbReference>
<dbReference type="GO" id="GO:0060017">
    <property type="term" value="P:parathyroid gland development"/>
    <property type="evidence" value="ECO:0000266"/>
    <property type="project" value="RGD"/>
</dbReference>
<dbReference type="GO" id="GO:0007389">
    <property type="term" value="P:pattern specification process"/>
    <property type="evidence" value="ECO:0000266"/>
    <property type="project" value="RGD"/>
</dbReference>
<dbReference type="GO" id="GO:0008284">
    <property type="term" value="P:positive regulation of cell population proliferation"/>
    <property type="evidence" value="ECO:0000266"/>
    <property type="project" value="RGD"/>
</dbReference>
<dbReference type="GO" id="GO:0070374">
    <property type="term" value="P:positive regulation of ERK1 and ERK2 cascade"/>
    <property type="evidence" value="ECO:0000266"/>
    <property type="project" value="RGD"/>
</dbReference>
<dbReference type="GO" id="GO:1903977">
    <property type="term" value="P:positive regulation of glial cell migration"/>
    <property type="evidence" value="ECO:0000266"/>
    <property type="project" value="RGD"/>
</dbReference>
<dbReference type="GO" id="GO:0043410">
    <property type="term" value="P:positive regulation of MAPK cascade"/>
    <property type="evidence" value="ECO:0000266"/>
    <property type="project" value="RGD"/>
</dbReference>
<dbReference type="GO" id="GO:0035022">
    <property type="term" value="P:positive regulation of Rac protein signal transduction"/>
    <property type="evidence" value="ECO:0000266"/>
    <property type="project" value="RGD"/>
</dbReference>
<dbReference type="GO" id="GO:1904395">
    <property type="term" value="P:positive regulation of skeletal muscle acetylcholine-gated channel clustering"/>
    <property type="evidence" value="ECO:0000266"/>
    <property type="project" value="RGD"/>
</dbReference>
<dbReference type="GO" id="GO:1900026">
    <property type="term" value="P:positive regulation of substrate adhesion-dependent cell spreading"/>
    <property type="evidence" value="ECO:0000266"/>
    <property type="project" value="RGD"/>
</dbReference>
<dbReference type="GO" id="GO:0098698">
    <property type="term" value="P:postsynaptic specialization assembly"/>
    <property type="evidence" value="ECO:0000266"/>
    <property type="project" value="RGD"/>
</dbReference>
<dbReference type="GO" id="GO:0038026">
    <property type="term" value="P:reelin-mediated signaling pathway"/>
    <property type="evidence" value="ECO:0000266"/>
    <property type="project" value="RGD"/>
</dbReference>
<dbReference type="GO" id="GO:0033628">
    <property type="term" value="P:regulation of cell adhesion mediated by integrin"/>
    <property type="evidence" value="ECO:0000266"/>
    <property type="project" value="RGD"/>
</dbReference>
<dbReference type="GO" id="GO:0001558">
    <property type="term" value="P:regulation of cell growth"/>
    <property type="evidence" value="ECO:0000266"/>
    <property type="project" value="RGD"/>
</dbReference>
<dbReference type="GO" id="GO:0050773">
    <property type="term" value="P:regulation of dendrite development"/>
    <property type="evidence" value="ECO:0000266"/>
    <property type="project" value="RGD"/>
</dbReference>
<dbReference type="GO" id="GO:0010468">
    <property type="term" value="P:regulation of gene expression"/>
    <property type="evidence" value="ECO:0000266"/>
    <property type="project" value="RGD"/>
</dbReference>
<dbReference type="GO" id="GO:0002685">
    <property type="term" value="P:regulation of leukocyte migration"/>
    <property type="evidence" value="ECO:0000266"/>
    <property type="project" value="RGD"/>
</dbReference>
<dbReference type="GO" id="GO:1904393">
    <property type="term" value="P:regulation of skeletal muscle acetylcholine-gated channel clustering"/>
    <property type="evidence" value="ECO:0000266"/>
    <property type="project" value="RGD"/>
</dbReference>
<dbReference type="GO" id="GO:2000404">
    <property type="term" value="P:regulation of T cell migration"/>
    <property type="evidence" value="ECO:0000266"/>
    <property type="project" value="RGD"/>
</dbReference>
<dbReference type="GO" id="GO:0071774">
    <property type="term" value="P:response to fibroblast growth factor"/>
    <property type="evidence" value="ECO:0000266"/>
    <property type="project" value="RGD"/>
</dbReference>
<dbReference type="GO" id="GO:0048384">
    <property type="term" value="P:retinoic acid receptor signaling pathway"/>
    <property type="evidence" value="ECO:0000266"/>
    <property type="project" value="RGD"/>
</dbReference>
<dbReference type="GO" id="GO:0007338">
    <property type="term" value="P:single fertilization"/>
    <property type="evidence" value="ECO:0000266"/>
    <property type="project" value="RGD"/>
</dbReference>
<dbReference type="GO" id="GO:0007283">
    <property type="term" value="P:spermatogenesis"/>
    <property type="evidence" value="ECO:0000266"/>
    <property type="project" value="RGD"/>
</dbReference>
<dbReference type="GO" id="GO:0050852">
    <property type="term" value="P:T cell receptor signaling pathway"/>
    <property type="evidence" value="ECO:0000266"/>
    <property type="project" value="RGD"/>
</dbReference>
<dbReference type="GO" id="GO:0048538">
    <property type="term" value="P:thymus development"/>
    <property type="evidence" value="ECO:0000266"/>
    <property type="project" value="RGD"/>
</dbReference>
<dbReference type="GO" id="GO:0001655">
    <property type="term" value="P:urogenital system development"/>
    <property type="evidence" value="ECO:0000266"/>
    <property type="project" value="RGD"/>
</dbReference>
<dbReference type="CDD" id="cd09926">
    <property type="entry name" value="SH2_CRK_like"/>
    <property type="match status" value="1"/>
</dbReference>
<dbReference type="CDD" id="cd11759">
    <property type="entry name" value="SH3_CRK_C"/>
    <property type="match status" value="1"/>
</dbReference>
<dbReference type="CDD" id="cd11758">
    <property type="entry name" value="SH3_CRK_N"/>
    <property type="match status" value="1"/>
</dbReference>
<dbReference type="FunFam" id="2.30.30.40:FF:000065">
    <property type="entry name" value="adapter molecule crk isoform X1"/>
    <property type="match status" value="1"/>
</dbReference>
<dbReference type="FunFam" id="3.30.505.10:FF:000026">
    <property type="entry name" value="adapter molecule crk isoform X1"/>
    <property type="match status" value="1"/>
</dbReference>
<dbReference type="FunFam" id="2.30.30.40:FF:000163">
    <property type="entry name" value="crk-like protein isoform X1"/>
    <property type="match status" value="1"/>
</dbReference>
<dbReference type="Gene3D" id="3.30.505.10">
    <property type="entry name" value="SH2 domain"/>
    <property type="match status" value="1"/>
</dbReference>
<dbReference type="Gene3D" id="2.30.30.40">
    <property type="entry name" value="SH3 Domains"/>
    <property type="match status" value="2"/>
</dbReference>
<dbReference type="InterPro" id="IPR035458">
    <property type="entry name" value="CRK_SH3_C"/>
</dbReference>
<dbReference type="InterPro" id="IPR035457">
    <property type="entry name" value="CRK_SH3_N"/>
</dbReference>
<dbReference type="InterPro" id="IPR000980">
    <property type="entry name" value="SH2"/>
</dbReference>
<dbReference type="InterPro" id="IPR036860">
    <property type="entry name" value="SH2_dom_sf"/>
</dbReference>
<dbReference type="InterPro" id="IPR036028">
    <property type="entry name" value="SH3-like_dom_sf"/>
</dbReference>
<dbReference type="InterPro" id="IPR001452">
    <property type="entry name" value="SH3_domain"/>
</dbReference>
<dbReference type="InterPro" id="IPR051184">
    <property type="entry name" value="Tyrosine-phos_adapter"/>
</dbReference>
<dbReference type="PANTHER" id="PTHR19969:SF5">
    <property type="entry name" value="CRK-LIKE PROTEIN"/>
    <property type="match status" value="1"/>
</dbReference>
<dbReference type="PANTHER" id="PTHR19969">
    <property type="entry name" value="SH2-SH3 ADAPTOR PROTEIN-RELATED"/>
    <property type="match status" value="1"/>
</dbReference>
<dbReference type="Pfam" id="PF00017">
    <property type="entry name" value="SH2"/>
    <property type="match status" value="1"/>
</dbReference>
<dbReference type="Pfam" id="PF00018">
    <property type="entry name" value="SH3_1"/>
    <property type="match status" value="1"/>
</dbReference>
<dbReference type="Pfam" id="PF07653">
    <property type="entry name" value="SH3_2"/>
    <property type="match status" value="1"/>
</dbReference>
<dbReference type="PRINTS" id="PR00401">
    <property type="entry name" value="SH2DOMAIN"/>
</dbReference>
<dbReference type="PRINTS" id="PR00452">
    <property type="entry name" value="SH3DOMAIN"/>
</dbReference>
<dbReference type="SMART" id="SM00252">
    <property type="entry name" value="SH2"/>
    <property type="match status" value="1"/>
</dbReference>
<dbReference type="SMART" id="SM00326">
    <property type="entry name" value="SH3"/>
    <property type="match status" value="2"/>
</dbReference>
<dbReference type="SUPFAM" id="SSF55550">
    <property type="entry name" value="SH2 domain"/>
    <property type="match status" value="1"/>
</dbReference>
<dbReference type="SUPFAM" id="SSF50044">
    <property type="entry name" value="SH3-domain"/>
    <property type="match status" value="2"/>
</dbReference>
<dbReference type="PROSITE" id="PS50001">
    <property type="entry name" value="SH2"/>
    <property type="match status" value="1"/>
</dbReference>
<dbReference type="PROSITE" id="PS50002">
    <property type="entry name" value="SH3"/>
    <property type="match status" value="2"/>
</dbReference>
<organism>
    <name type="scientific">Rattus norvegicus</name>
    <name type="common">Rat</name>
    <dbReference type="NCBI Taxonomy" id="10116"/>
    <lineage>
        <taxon>Eukaryota</taxon>
        <taxon>Metazoa</taxon>
        <taxon>Chordata</taxon>
        <taxon>Craniata</taxon>
        <taxon>Vertebrata</taxon>
        <taxon>Euteleostomi</taxon>
        <taxon>Mammalia</taxon>
        <taxon>Eutheria</taxon>
        <taxon>Euarchontoglires</taxon>
        <taxon>Glires</taxon>
        <taxon>Rodentia</taxon>
        <taxon>Myomorpha</taxon>
        <taxon>Muroidea</taxon>
        <taxon>Muridae</taxon>
        <taxon>Murinae</taxon>
        <taxon>Rattus</taxon>
    </lineage>
</organism>
<evidence type="ECO:0000250" key="1"/>
<evidence type="ECO:0000250" key="2">
    <source>
        <dbReference type="UniProtKB" id="P46109"/>
    </source>
</evidence>
<evidence type="ECO:0000250" key="3">
    <source>
        <dbReference type="UniProtKB" id="P47941"/>
    </source>
</evidence>
<evidence type="ECO:0000255" key="4">
    <source>
        <dbReference type="PROSITE-ProRule" id="PRU00191"/>
    </source>
</evidence>
<evidence type="ECO:0000255" key="5">
    <source>
        <dbReference type="PROSITE-ProRule" id="PRU00192"/>
    </source>
</evidence>
<evidence type="ECO:0000256" key="6">
    <source>
        <dbReference type="SAM" id="MobiDB-lite"/>
    </source>
</evidence>
<evidence type="ECO:0000269" key="7">
    <source>
    </source>
</evidence>
<evidence type="ECO:0000305" key="8"/>
<evidence type="ECO:0000312" key="9">
    <source>
        <dbReference type="EMBL" id="AAH85865.1"/>
    </source>
</evidence>
<evidence type="ECO:0000312" key="10">
    <source>
        <dbReference type="EMBL" id="EDL77890.1"/>
    </source>
</evidence>
<evidence type="ECO:0000312" key="11">
    <source>
        <dbReference type="RGD" id="1308531"/>
    </source>
</evidence>
<evidence type="ECO:0007744" key="12">
    <source>
    </source>
</evidence>
<proteinExistence type="evidence at protein level"/>
<name>CRKL_RAT</name>
<reference evidence="8 10" key="1">
    <citation type="submission" date="2005-09" db="EMBL/GenBank/DDBJ databases">
        <authorList>
            <person name="Mural R.J."/>
            <person name="Adams M.D."/>
            <person name="Myers E.W."/>
            <person name="Smith H.O."/>
            <person name="Venter J.C."/>
        </authorList>
    </citation>
    <scope>NUCLEOTIDE SEQUENCE [LARGE SCALE GENOMIC DNA]</scope>
    <source>
        <strain evidence="10">Brown Norway</strain>
    </source>
</reference>
<reference evidence="9" key="2">
    <citation type="journal article" date="2004" name="Genome Res.">
        <title>The status, quality, and expansion of the NIH full-length cDNA project: the Mammalian Gene Collection (MGC).</title>
        <authorList>
            <consortium name="The MGC Project Team"/>
        </authorList>
    </citation>
    <scope>NUCLEOTIDE SEQUENCE [LARGE SCALE MRNA]</scope>
    <source>
        <strain evidence="7">Brown Norway</strain>
        <tissue evidence="9">Heart</tissue>
    </source>
</reference>
<reference evidence="8 10" key="3">
    <citation type="submission" date="2009-03" db="UniProtKB">
        <authorList>
            <person name="Maurya D.K."/>
            <person name="Bhargava P."/>
        </authorList>
    </citation>
    <scope>IDENTIFICATION BY MASS SPECTROMETRY</scope>
</reference>
<reference key="4">
    <citation type="journal article" date="2012" name="Nat. Commun.">
        <title>Quantitative maps of protein phosphorylation sites across 14 different rat organs and tissues.</title>
        <authorList>
            <person name="Lundby A."/>
            <person name="Secher A."/>
            <person name="Lage K."/>
            <person name="Nordsborg N.B."/>
            <person name="Dmytriyev A."/>
            <person name="Lundby C."/>
            <person name="Olsen J.V."/>
        </authorList>
    </citation>
    <scope>PHOSPHORYLATION [LARGE SCALE ANALYSIS] AT TYR-207</scope>
    <scope>IDENTIFICATION BY MASS SPECTROMETRY [LARGE SCALE ANALYSIS]</scope>
</reference>
<accession>Q5U2U2</accession>
<sequence length="303" mass="33865">MSSARFDSSDRSAWYMGPVSRQEAQTRLQGQRHGMFLVRDSSTCPGDYVLSVSENSRVSHYIINSLPNRRFKIGDQEFDHLPALLEFYKIHYLDTTTLIEPAPRYPNPPMGSVSAPNLSTAEENLEYVRTLYDFPGNDAEDLPFKKGELLVIIEKPEEQWWSARNKDGRVGMIPVPYVEKLVRSSPHGKHGNRNSNSYGIPEPAHAYAQPQTTTPLPTVASTPGAAINPLPSTQNGPVFAKAIQKRVPCAYDKTALALEVGDIVKVTRMNINGQWEGEVNGRKGLFPFTHVKIFDPQNPDDNE</sequence>
<gene>
    <name evidence="9 11" type="primary">Crkl</name>
</gene>
<keyword id="KW-0597">Phosphoprotein</keyword>
<keyword id="KW-1185">Reference proteome</keyword>
<keyword id="KW-0677">Repeat</keyword>
<keyword id="KW-0727">SH2 domain</keyword>
<keyword id="KW-0728">SH3 domain</keyword>
<feature type="chain" id="PRO_0000371244" description="Crk-like protein">
    <location>
        <begin position="1"/>
        <end position="303"/>
    </location>
</feature>
<feature type="domain" description="SH2" evidence="4">
    <location>
        <begin position="14"/>
        <end position="102"/>
    </location>
</feature>
<feature type="domain" description="SH3 1" evidence="5">
    <location>
        <begin position="123"/>
        <end position="183"/>
    </location>
</feature>
<feature type="domain" description="SH3 2" evidence="5">
    <location>
        <begin position="235"/>
        <end position="296"/>
    </location>
</feature>
<feature type="region of interest" description="Disordered" evidence="6">
    <location>
        <begin position="184"/>
        <end position="204"/>
    </location>
</feature>
<feature type="modified residue" description="Phosphotyrosine" evidence="2">
    <location>
        <position position="127"/>
    </location>
</feature>
<feature type="modified residue" description="Phosphotyrosine" evidence="12">
    <location>
        <position position="207"/>
    </location>
</feature>
<comment type="function">
    <text evidence="1">May mediate the transduction of intracellular signals.</text>
</comment>
<comment type="subunit">
    <text evidence="2 3">Interacts with INPP5D/SHIP1 (By similarity). Interacts with DOCK2 and EPOR. Interacts with phosphorylated CBLB and IRS4 (By similarity). Interacts with BCAR1/CAS and NEDD9/HEF1 (By similarity).</text>
</comment>
<comment type="similarity">
    <text evidence="8">Belongs to the CRK family.</text>
</comment>